<sequence length="316" mass="36360">MSIKEQTLMTPYLQFDRNQWAALRDSVPMTLSEDEIARLKGINEDLSLEEVAEIYLPLSRLLNFYISSNLRRQAVLEQFLGTNGQRIPYIISIAGSVAVGKSTTARVLQALLSRWPEHRRVELITTDGFLHPNQVLKERGLMKKKGFPESYDMHRLVKFVSDLKSGVPNVTAPVYSHLIYDVIPDGDKTVVQPDILILEGLNVLQSGMDYPHDPHHVFVSDFVDFSIYVDAPEDLLQTWYINRFLKFREGAFTDPDSYFHNYAKLTKEEAIKTAMTLWKEINWLNLKQNILPTRERASLILTKSANHAVEEVRLRK</sequence>
<organism>
    <name type="scientific">Escherichia coli O8 (strain IAI1)</name>
    <dbReference type="NCBI Taxonomy" id="585034"/>
    <lineage>
        <taxon>Bacteria</taxon>
        <taxon>Pseudomonadati</taxon>
        <taxon>Pseudomonadota</taxon>
        <taxon>Gammaproteobacteria</taxon>
        <taxon>Enterobacterales</taxon>
        <taxon>Enterobacteriaceae</taxon>
        <taxon>Escherichia</taxon>
    </lineage>
</organism>
<protein>
    <recommendedName>
        <fullName evidence="1">Pantothenate kinase</fullName>
        <ecNumber evidence="1">2.7.1.33</ecNumber>
    </recommendedName>
    <alternativeName>
        <fullName evidence="1">Pantothenic acid kinase</fullName>
    </alternativeName>
</protein>
<accession>B7M726</accession>
<reference key="1">
    <citation type="journal article" date="2009" name="PLoS Genet.">
        <title>Organised genome dynamics in the Escherichia coli species results in highly diverse adaptive paths.</title>
        <authorList>
            <person name="Touchon M."/>
            <person name="Hoede C."/>
            <person name="Tenaillon O."/>
            <person name="Barbe V."/>
            <person name="Baeriswyl S."/>
            <person name="Bidet P."/>
            <person name="Bingen E."/>
            <person name="Bonacorsi S."/>
            <person name="Bouchier C."/>
            <person name="Bouvet O."/>
            <person name="Calteau A."/>
            <person name="Chiapello H."/>
            <person name="Clermont O."/>
            <person name="Cruveiller S."/>
            <person name="Danchin A."/>
            <person name="Diard M."/>
            <person name="Dossat C."/>
            <person name="Karoui M.E."/>
            <person name="Frapy E."/>
            <person name="Garry L."/>
            <person name="Ghigo J.M."/>
            <person name="Gilles A.M."/>
            <person name="Johnson J."/>
            <person name="Le Bouguenec C."/>
            <person name="Lescat M."/>
            <person name="Mangenot S."/>
            <person name="Martinez-Jehanne V."/>
            <person name="Matic I."/>
            <person name="Nassif X."/>
            <person name="Oztas S."/>
            <person name="Petit M.A."/>
            <person name="Pichon C."/>
            <person name="Rouy Z."/>
            <person name="Ruf C.S."/>
            <person name="Schneider D."/>
            <person name="Tourret J."/>
            <person name="Vacherie B."/>
            <person name="Vallenet D."/>
            <person name="Medigue C."/>
            <person name="Rocha E.P.C."/>
            <person name="Denamur E."/>
        </authorList>
    </citation>
    <scope>NUCLEOTIDE SEQUENCE [LARGE SCALE GENOMIC DNA]</scope>
    <source>
        <strain>IAI1</strain>
    </source>
</reference>
<feature type="chain" id="PRO_1000189614" description="Pantothenate kinase">
    <location>
        <begin position="1"/>
        <end position="316"/>
    </location>
</feature>
<feature type="binding site" evidence="1">
    <location>
        <begin position="95"/>
        <end position="102"/>
    </location>
    <ligand>
        <name>ATP</name>
        <dbReference type="ChEBI" id="CHEBI:30616"/>
    </ligand>
</feature>
<gene>
    <name evidence="1" type="primary">coaA</name>
    <name type="ordered locus">ECIAI1_4191</name>
</gene>
<dbReference type="EC" id="2.7.1.33" evidence="1"/>
<dbReference type="EMBL" id="CU928160">
    <property type="protein sequence ID" value="CAR00952.1"/>
    <property type="molecule type" value="Genomic_DNA"/>
</dbReference>
<dbReference type="RefSeq" id="WP_000023081.1">
    <property type="nucleotide sequence ID" value="NC_011741.1"/>
</dbReference>
<dbReference type="SMR" id="B7M726"/>
<dbReference type="GeneID" id="93777919"/>
<dbReference type="KEGG" id="ecr:ECIAI1_4191"/>
<dbReference type="HOGENOM" id="CLU_053818_1_1_6"/>
<dbReference type="UniPathway" id="UPA00241">
    <property type="reaction ID" value="UER00352"/>
</dbReference>
<dbReference type="GO" id="GO:0005737">
    <property type="term" value="C:cytoplasm"/>
    <property type="evidence" value="ECO:0007669"/>
    <property type="project" value="UniProtKB-SubCell"/>
</dbReference>
<dbReference type="GO" id="GO:0005524">
    <property type="term" value="F:ATP binding"/>
    <property type="evidence" value="ECO:0007669"/>
    <property type="project" value="UniProtKB-UniRule"/>
</dbReference>
<dbReference type="GO" id="GO:0004594">
    <property type="term" value="F:pantothenate kinase activity"/>
    <property type="evidence" value="ECO:0007669"/>
    <property type="project" value="UniProtKB-UniRule"/>
</dbReference>
<dbReference type="GO" id="GO:0015937">
    <property type="term" value="P:coenzyme A biosynthetic process"/>
    <property type="evidence" value="ECO:0007669"/>
    <property type="project" value="UniProtKB-UniRule"/>
</dbReference>
<dbReference type="CDD" id="cd02025">
    <property type="entry name" value="PanK"/>
    <property type="match status" value="1"/>
</dbReference>
<dbReference type="FunFam" id="3.40.50.300:FF:000242">
    <property type="entry name" value="Pantothenate kinase"/>
    <property type="match status" value="1"/>
</dbReference>
<dbReference type="Gene3D" id="3.40.50.300">
    <property type="entry name" value="P-loop containing nucleotide triphosphate hydrolases"/>
    <property type="match status" value="1"/>
</dbReference>
<dbReference type="HAMAP" id="MF_00215">
    <property type="entry name" value="Pantothen_kinase_1"/>
    <property type="match status" value="1"/>
</dbReference>
<dbReference type="InterPro" id="IPR027417">
    <property type="entry name" value="P-loop_NTPase"/>
</dbReference>
<dbReference type="InterPro" id="IPR004566">
    <property type="entry name" value="PanK"/>
</dbReference>
<dbReference type="InterPro" id="IPR006083">
    <property type="entry name" value="PRK/URK"/>
</dbReference>
<dbReference type="NCBIfam" id="TIGR00554">
    <property type="entry name" value="panK_bact"/>
    <property type="match status" value="1"/>
</dbReference>
<dbReference type="PANTHER" id="PTHR10285">
    <property type="entry name" value="URIDINE KINASE"/>
    <property type="match status" value="1"/>
</dbReference>
<dbReference type="Pfam" id="PF00485">
    <property type="entry name" value="PRK"/>
    <property type="match status" value="1"/>
</dbReference>
<dbReference type="PIRSF" id="PIRSF000545">
    <property type="entry name" value="Pantothenate_kin"/>
    <property type="match status" value="1"/>
</dbReference>
<dbReference type="SUPFAM" id="SSF52540">
    <property type="entry name" value="P-loop containing nucleoside triphosphate hydrolases"/>
    <property type="match status" value="1"/>
</dbReference>
<evidence type="ECO:0000255" key="1">
    <source>
        <dbReference type="HAMAP-Rule" id="MF_00215"/>
    </source>
</evidence>
<name>COAA_ECO8A</name>
<proteinExistence type="inferred from homology"/>
<keyword id="KW-0067">ATP-binding</keyword>
<keyword id="KW-0173">Coenzyme A biosynthesis</keyword>
<keyword id="KW-0963">Cytoplasm</keyword>
<keyword id="KW-0418">Kinase</keyword>
<keyword id="KW-0547">Nucleotide-binding</keyword>
<keyword id="KW-0808">Transferase</keyword>
<comment type="catalytic activity">
    <reaction evidence="1">
        <text>(R)-pantothenate + ATP = (R)-4'-phosphopantothenate + ADP + H(+)</text>
        <dbReference type="Rhea" id="RHEA:16373"/>
        <dbReference type="ChEBI" id="CHEBI:10986"/>
        <dbReference type="ChEBI" id="CHEBI:15378"/>
        <dbReference type="ChEBI" id="CHEBI:29032"/>
        <dbReference type="ChEBI" id="CHEBI:30616"/>
        <dbReference type="ChEBI" id="CHEBI:456216"/>
        <dbReference type="EC" id="2.7.1.33"/>
    </reaction>
</comment>
<comment type="pathway">
    <text evidence="1">Cofactor biosynthesis; coenzyme A biosynthesis; CoA from (R)-pantothenate: step 1/5.</text>
</comment>
<comment type="subcellular location">
    <subcellularLocation>
        <location evidence="1">Cytoplasm</location>
    </subcellularLocation>
</comment>
<comment type="similarity">
    <text evidence="1">Belongs to the prokaryotic pantothenate kinase family.</text>
</comment>